<name>MOAB_METJA</name>
<feature type="chain" id="PRO_0000170981" description="Probable molybdopterin adenylyltransferase">
    <location>
        <begin position="1"/>
        <end position="163"/>
    </location>
</feature>
<gene>
    <name type="primary">moaB</name>
    <name type="ordered locus">MJ0167</name>
</gene>
<protein>
    <recommendedName>
        <fullName>Probable molybdopterin adenylyltransferase</fullName>
        <shortName>MPT adenylyltransferase</shortName>
        <ecNumber>2.7.7.75</ecNumber>
    </recommendedName>
</protein>
<dbReference type="EC" id="2.7.7.75"/>
<dbReference type="EMBL" id="L77117">
    <property type="protein sequence ID" value="AAB98149.1"/>
    <property type="molecule type" value="Genomic_DNA"/>
</dbReference>
<dbReference type="PIR" id="H64320">
    <property type="entry name" value="H64320"/>
</dbReference>
<dbReference type="RefSeq" id="WP_010869662.1">
    <property type="nucleotide sequence ID" value="NC_000909.1"/>
</dbReference>
<dbReference type="SMR" id="Q57631"/>
<dbReference type="FunCoup" id="Q57631">
    <property type="interactions" value="114"/>
</dbReference>
<dbReference type="STRING" id="243232.MJ_0167"/>
<dbReference type="PaxDb" id="243232-MJ_0167"/>
<dbReference type="EnsemblBacteria" id="AAB98149">
    <property type="protein sequence ID" value="AAB98149"/>
    <property type="gene ID" value="MJ_0167"/>
</dbReference>
<dbReference type="GeneID" id="1451014"/>
<dbReference type="KEGG" id="mja:MJ_0167"/>
<dbReference type="eggNOG" id="arCOG00214">
    <property type="taxonomic scope" value="Archaea"/>
</dbReference>
<dbReference type="HOGENOM" id="CLU_077358_2_3_2"/>
<dbReference type="InParanoid" id="Q57631"/>
<dbReference type="OrthoDB" id="205337at2157"/>
<dbReference type="PhylomeDB" id="Q57631"/>
<dbReference type="UniPathway" id="UPA00344"/>
<dbReference type="Proteomes" id="UP000000805">
    <property type="component" value="Chromosome"/>
</dbReference>
<dbReference type="GO" id="GO:0005829">
    <property type="term" value="C:cytosol"/>
    <property type="evidence" value="ECO:0000318"/>
    <property type="project" value="GO_Central"/>
</dbReference>
<dbReference type="GO" id="GO:0005524">
    <property type="term" value="F:ATP binding"/>
    <property type="evidence" value="ECO:0007669"/>
    <property type="project" value="UniProtKB-KW"/>
</dbReference>
<dbReference type="GO" id="GO:0061598">
    <property type="term" value="F:molybdopterin adenylyltransferase activity"/>
    <property type="evidence" value="ECO:0007669"/>
    <property type="project" value="UniProtKB-EC"/>
</dbReference>
<dbReference type="GO" id="GO:0006777">
    <property type="term" value="P:Mo-molybdopterin cofactor biosynthetic process"/>
    <property type="evidence" value="ECO:0007669"/>
    <property type="project" value="UniProtKB-KW"/>
</dbReference>
<dbReference type="CDD" id="cd00886">
    <property type="entry name" value="MogA_MoaB"/>
    <property type="match status" value="1"/>
</dbReference>
<dbReference type="Gene3D" id="3.40.980.10">
    <property type="entry name" value="MoaB/Mog-like domain"/>
    <property type="match status" value="1"/>
</dbReference>
<dbReference type="InterPro" id="IPR012245">
    <property type="entry name" value="MoaB"/>
</dbReference>
<dbReference type="InterPro" id="IPR036425">
    <property type="entry name" value="MoaB/Mog-like_dom_sf"/>
</dbReference>
<dbReference type="InterPro" id="IPR001453">
    <property type="entry name" value="MoaB/Mog_dom"/>
</dbReference>
<dbReference type="InterPro" id="IPR008284">
    <property type="entry name" value="MoCF_biosynth_CS"/>
</dbReference>
<dbReference type="NCBIfam" id="TIGR00177">
    <property type="entry name" value="molyb_syn"/>
    <property type="match status" value="1"/>
</dbReference>
<dbReference type="PANTHER" id="PTHR43232">
    <property type="entry name" value="MOLYBDENUM COFACTOR BIOSYNTHESIS PROTEIN B"/>
    <property type="match status" value="1"/>
</dbReference>
<dbReference type="PANTHER" id="PTHR43232:SF2">
    <property type="entry name" value="MOLYBDENUM COFACTOR BIOSYNTHESIS PROTEIN B"/>
    <property type="match status" value="1"/>
</dbReference>
<dbReference type="Pfam" id="PF00994">
    <property type="entry name" value="MoCF_biosynth"/>
    <property type="match status" value="1"/>
</dbReference>
<dbReference type="PIRSF" id="PIRSF006443">
    <property type="entry name" value="MoaB"/>
    <property type="match status" value="1"/>
</dbReference>
<dbReference type="SMART" id="SM00852">
    <property type="entry name" value="MoCF_biosynth"/>
    <property type="match status" value="1"/>
</dbReference>
<dbReference type="SUPFAM" id="SSF53218">
    <property type="entry name" value="Molybdenum cofactor biosynthesis proteins"/>
    <property type="match status" value="1"/>
</dbReference>
<dbReference type="PROSITE" id="PS01078">
    <property type="entry name" value="MOCF_BIOSYNTHESIS_1"/>
    <property type="match status" value="1"/>
</dbReference>
<evidence type="ECO:0000250" key="1"/>
<evidence type="ECO:0000305" key="2"/>
<proteinExistence type="inferred from homology"/>
<comment type="function">
    <text evidence="1">Catalyzes the adenylation of molybdopterin as part of the biosynthesis of the molybdenum-cofactor.</text>
</comment>
<comment type="catalytic activity">
    <reaction>
        <text>molybdopterin + ATP + H(+) = adenylyl-molybdopterin + diphosphate</text>
        <dbReference type="Rhea" id="RHEA:31331"/>
        <dbReference type="ChEBI" id="CHEBI:15378"/>
        <dbReference type="ChEBI" id="CHEBI:30616"/>
        <dbReference type="ChEBI" id="CHEBI:33019"/>
        <dbReference type="ChEBI" id="CHEBI:58698"/>
        <dbReference type="ChEBI" id="CHEBI:62727"/>
        <dbReference type="EC" id="2.7.7.75"/>
    </reaction>
</comment>
<comment type="pathway">
    <text>Cofactor biosynthesis; molybdopterin biosynthesis.</text>
</comment>
<comment type="similarity">
    <text evidence="2">Belongs to the MoaB/Mog family.</text>
</comment>
<sequence length="163" mass="18247">MHKRIKNIKYAVVTVSDSRYNDLIKGKEVDDKSGKLLKKELNAKVYTIIPDNKNMIKGIVEHIVEFFDVDCIVFTGGTGIAERDVTVEALKEIIEKELDGFKIIFQKLSYEEVGFSAMLSRAMAGIYKGKIIYALPGSVNACRTALKIIKEETGHILGHLREG</sequence>
<organism>
    <name type="scientific">Methanocaldococcus jannaschii (strain ATCC 43067 / DSM 2661 / JAL-1 / JCM 10045 / NBRC 100440)</name>
    <name type="common">Methanococcus jannaschii</name>
    <dbReference type="NCBI Taxonomy" id="243232"/>
    <lineage>
        <taxon>Archaea</taxon>
        <taxon>Methanobacteriati</taxon>
        <taxon>Methanobacteriota</taxon>
        <taxon>Methanomada group</taxon>
        <taxon>Methanococci</taxon>
        <taxon>Methanococcales</taxon>
        <taxon>Methanocaldococcaceae</taxon>
        <taxon>Methanocaldococcus</taxon>
    </lineage>
</organism>
<keyword id="KW-0067">ATP-binding</keyword>
<keyword id="KW-0501">Molybdenum cofactor biosynthesis</keyword>
<keyword id="KW-0547">Nucleotide-binding</keyword>
<keyword id="KW-1185">Reference proteome</keyword>
<keyword id="KW-0808">Transferase</keyword>
<reference key="1">
    <citation type="journal article" date="1996" name="Science">
        <title>Complete genome sequence of the methanogenic archaeon, Methanococcus jannaschii.</title>
        <authorList>
            <person name="Bult C.J."/>
            <person name="White O."/>
            <person name="Olsen G.J."/>
            <person name="Zhou L."/>
            <person name="Fleischmann R.D."/>
            <person name="Sutton G.G."/>
            <person name="Blake J.A."/>
            <person name="FitzGerald L.M."/>
            <person name="Clayton R.A."/>
            <person name="Gocayne J.D."/>
            <person name="Kerlavage A.R."/>
            <person name="Dougherty B.A."/>
            <person name="Tomb J.-F."/>
            <person name="Adams M.D."/>
            <person name="Reich C.I."/>
            <person name="Overbeek R."/>
            <person name="Kirkness E.F."/>
            <person name="Weinstock K.G."/>
            <person name="Merrick J.M."/>
            <person name="Glodek A."/>
            <person name="Scott J.L."/>
            <person name="Geoghagen N.S.M."/>
            <person name="Weidman J.F."/>
            <person name="Fuhrmann J.L."/>
            <person name="Nguyen D."/>
            <person name="Utterback T.R."/>
            <person name="Kelley J.M."/>
            <person name="Peterson J.D."/>
            <person name="Sadow P.W."/>
            <person name="Hanna M.C."/>
            <person name="Cotton M.D."/>
            <person name="Roberts K.M."/>
            <person name="Hurst M.A."/>
            <person name="Kaine B.P."/>
            <person name="Borodovsky M."/>
            <person name="Klenk H.-P."/>
            <person name="Fraser C.M."/>
            <person name="Smith H.O."/>
            <person name="Woese C.R."/>
            <person name="Venter J.C."/>
        </authorList>
    </citation>
    <scope>NUCLEOTIDE SEQUENCE [LARGE SCALE GENOMIC DNA]</scope>
    <source>
        <strain>ATCC 43067 / DSM 2661 / JAL-1 / JCM 10045 / NBRC 100440</strain>
    </source>
</reference>
<accession>Q57631</accession>